<dbReference type="EMBL" id="AE017354">
    <property type="protein sequence ID" value="AAU26496.1"/>
    <property type="molecule type" value="Genomic_DNA"/>
</dbReference>
<dbReference type="RefSeq" id="WP_010946148.1">
    <property type="nucleotide sequence ID" value="NC_002942.5"/>
</dbReference>
<dbReference type="RefSeq" id="YP_094443.1">
    <property type="nucleotide sequence ID" value="NC_002942.5"/>
</dbReference>
<dbReference type="SMR" id="Q5ZYH3"/>
<dbReference type="STRING" id="272624.lpg0399"/>
<dbReference type="PaxDb" id="272624-lpg0399"/>
<dbReference type="GeneID" id="57034402"/>
<dbReference type="KEGG" id="lpn:lpg0399"/>
<dbReference type="PATRIC" id="fig|272624.6.peg.413"/>
<dbReference type="eggNOG" id="COG0228">
    <property type="taxonomic scope" value="Bacteria"/>
</dbReference>
<dbReference type="HOGENOM" id="CLU_100590_5_1_6"/>
<dbReference type="OrthoDB" id="9807878at2"/>
<dbReference type="Proteomes" id="UP000000609">
    <property type="component" value="Chromosome"/>
</dbReference>
<dbReference type="GO" id="GO:0005737">
    <property type="term" value="C:cytoplasm"/>
    <property type="evidence" value="ECO:0007669"/>
    <property type="project" value="UniProtKB-ARBA"/>
</dbReference>
<dbReference type="GO" id="GO:0015935">
    <property type="term" value="C:small ribosomal subunit"/>
    <property type="evidence" value="ECO:0007669"/>
    <property type="project" value="TreeGrafter"/>
</dbReference>
<dbReference type="GO" id="GO:0003735">
    <property type="term" value="F:structural constituent of ribosome"/>
    <property type="evidence" value="ECO:0007669"/>
    <property type="project" value="InterPro"/>
</dbReference>
<dbReference type="GO" id="GO:0006412">
    <property type="term" value="P:translation"/>
    <property type="evidence" value="ECO:0007669"/>
    <property type="project" value="UniProtKB-UniRule"/>
</dbReference>
<dbReference type="Gene3D" id="3.30.1320.10">
    <property type="match status" value="1"/>
</dbReference>
<dbReference type="HAMAP" id="MF_00385">
    <property type="entry name" value="Ribosomal_bS16"/>
    <property type="match status" value="1"/>
</dbReference>
<dbReference type="InterPro" id="IPR000307">
    <property type="entry name" value="Ribosomal_bS16"/>
</dbReference>
<dbReference type="InterPro" id="IPR020592">
    <property type="entry name" value="Ribosomal_bS16_CS"/>
</dbReference>
<dbReference type="InterPro" id="IPR023803">
    <property type="entry name" value="Ribosomal_bS16_dom_sf"/>
</dbReference>
<dbReference type="NCBIfam" id="TIGR00002">
    <property type="entry name" value="S16"/>
    <property type="match status" value="1"/>
</dbReference>
<dbReference type="PANTHER" id="PTHR12919">
    <property type="entry name" value="30S RIBOSOMAL PROTEIN S16"/>
    <property type="match status" value="1"/>
</dbReference>
<dbReference type="PANTHER" id="PTHR12919:SF20">
    <property type="entry name" value="SMALL RIBOSOMAL SUBUNIT PROTEIN BS16M"/>
    <property type="match status" value="1"/>
</dbReference>
<dbReference type="Pfam" id="PF00886">
    <property type="entry name" value="Ribosomal_S16"/>
    <property type="match status" value="1"/>
</dbReference>
<dbReference type="SUPFAM" id="SSF54565">
    <property type="entry name" value="Ribosomal protein S16"/>
    <property type="match status" value="1"/>
</dbReference>
<dbReference type="PROSITE" id="PS00732">
    <property type="entry name" value="RIBOSOMAL_S16"/>
    <property type="match status" value="1"/>
</dbReference>
<organism>
    <name type="scientific">Legionella pneumophila subsp. pneumophila (strain Philadelphia 1 / ATCC 33152 / DSM 7513)</name>
    <dbReference type="NCBI Taxonomy" id="272624"/>
    <lineage>
        <taxon>Bacteria</taxon>
        <taxon>Pseudomonadati</taxon>
        <taxon>Pseudomonadota</taxon>
        <taxon>Gammaproteobacteria</taxon>
        <taxon>Legionellales</taxon>
        <taxon>Legionellaceae</taxon>
        <taxon>Legionella</taxon>
    </lineage>
</organism>
<protein>
    <recommendedName>
        <fullName evidence="1">Small ribosomal subunit protein bS16</fullName>
    </recommendedName>
    <alternativeName>
        <fullName evidence="2">30S ribosomal protein S16</fullName>
    </alternativeName>
</protein>
<gene>
    <name evidence="1" type="primary">rpsP</name>
    <name type="ordered locus">lpg0399</name>
</gene>
<feature type="chain" id="PRO_0000243821" description="Small ribosomal subunit protein bS16">
    <location>
        <begin position="1"/>
        <end position="86"/>
    </location>
</feature>
<comment type="similarity">
    <text evidence="1">Belongs to the bacterial ribosomal protein bS16 family.</text>
</comment>
<sequence length="86" mass="9940">MVVIRLSRAGAKKRPFYHMVVTDSRKRRDGNYIERIGYFNPVARGQEVKLHIDMDKMTHWQKVGAQLSDRVSALLKEHSKKSETAA</sequence>
<keyword id="KW-1185">Reference proteome</keyword>
<keyword id="KW-0687">Ribonucleoprotein</keyword>
<keyword id="KW-0689">Ribosomal protein</keyword>
<reference key="1">
    <citation type="journal article" date="2004" name="Science">
        <title>The genomic sequence of the accidental pathogen Legionella pneumophila.</title>
        <authorList>
            <person name="Chien M."/>
            <person name="Morozova I."/>
            <person name="Shi S."/>
            <person name="Sheng H."/>
            <person name="Chen J."/>
            <person name="Gomez S.M."/>
            <person name="Asamani G."/>
            <person name="Hill K."/>
            <person name="Nuara J."/>
            <person name="Feder M."/>
            <person name="Rineer J."/>
            <person name="Greenberg J.J."/>
            <person name="Steshenko V."/>
            <person name="Park S.H."/>
            <person name="Zhao B."/>
            <person name="Teplitskaya E."/>
            <person name="Edwards J.R."/>
            <person name="Pampou S."/>
            <person name="Georghiou A."/>
            <person name="Chou I.-C."/>
            <person name="Iannuccilli W."/>
            <person name="Ulz M.E."/>
            <person name="Kim D.H."/>
            <person name="Geringer-Sameth A."/>
            <person name="Goldsberry C."/>
            <person name="Morozov P."/>
            <person name="Fischer S.G."/>
            <person name="Segal G."/>
            <person name="Qu X."/>
            <person name="Rzhetsky A."/>
            <person name="Zhang P."/>
            <person name="Cayanis E."/>
            <person name="De Jong P.J."/>
            <person name="Ju J."/>
            <person name="Kalachikov S."/>
            <person name="Shuman H.A."/>
            <person name="Russo J.J."/>
        </authorList>
    </citation>
    <scope>NUCLEOTIDE SEQUENCE [LARGE SCALE GENOMIC DNA]</scope>
    <source>
        <strain>Philadelphia 1 / ATCC 33152 / DSM 7513</strain>
    </source>
</reference>
<accession>Q5ZYH3</accession>
<proteinExistence type="inferred from homology"/>
<evidence type="ECO:0000255" key="1">
    <source>
        <dbReference type="HAMAP-Rule" id="MF_00385"/>
    </source>
</evidence>
<evidence type="ECO:0000305" key="2"/>
<name>RS16_LEGPH</name>